<feature type="chain" id="PRO_1000213810" description="Cell division protein SepF">
    <location>
        <begin position="1"/>
        <end position="156"/>
    </location>
</feature>
<feature type="region of interest" description="Disordered" evidence="2">
    <location>
        <begin position="30"/>
        <end position="49"/>
    </location>
</feature>
<reference key="1">
    <citation type="journal article" date="2011" name="J. Bacteriol.">
        <title>Complete genome sequence of the Thermophilic Bacterium Exiguobacterium sp. AT1b.</title>
        <authorList>
            <person name="Vishnivetskaya T.A."/>
            <person name="Lucas S."/>
            <person name="Copeland A."/>
            <person name="Lapidus A."/>
            <person name="Glavina del Rio T."/>
            <person name="Dalin E."/>
            <person name="Tice H."/>
            <person name="Bruce D.C."/>
            <person name="Goodwin L.A."/>
            <person name="Pitluck S."/>
            <person name="Saunders E."/>
            <person name="Brettin T."/>
            <person name="Detter C."/>
            <person name="Han C."/>
            <person name="Larimer F."/>
            <person name="Land M.L."/>
            <person name="Hauser L.J."/>
            <person name="Kyrpides N.C."/>
            <person name="Ovchinnikova G."/>
            <person name="Kathariou S."/>
            <person name="Ramaley R.F."/>
            <person name="Rodrigues D.F."/>
            <person name="Hendrix C."/>
            <person name="Richardson P."/>
            <person name="Tiedje J.M."/>
        </authorList>
    </citation>
    <scope>NUCLEOTIDE SEQUENCE [LARGE SCALE GENOMIC DNA]</scope>
    <source>
        <strain>ATCC BAA-1283 / AT1b</strain>
    </source>
</reference>
<name>SEPF_EXISA</name>
<dbReference type="EMBL" id="CP001615">
    <property type="protein sequence ID" value="ACQ71757.1"/>
    <property type="molecule type" value="Genomic_DNA"/>
</dbReference>
<dbReference type="RefSeq" id="WP_015881316.1">
    <property type="nucleotide sequence ID" value="NC_012673.1"/>
</dbReference>
<dbReference type="SMR" id="C4L5V1"/>
<dbReference type="STRING" id="360911.EAT1b_2843"/>
<dbReference type="KEGG" id="eat:EAT1b_2843"/>
<dbReference type="eggNOG" id="COG1799">
    <property type="taxonomic scope" value="Bacteria"/>
</dbReference>
<dbReference type="HOGENOM" id="CLU_078499_4_1_9"/>
<dbReference type="OrthoDB" id="9815206at2"/>
<dbReference type="Proteomes" id="UP000000716">
    <property type="component" value="Chromosome"/>
</dbReference>
<dbReference type="GO" id="GO:0005737">
    <property type="term" value="C:cytoplasm"/>
    <property type="evidence" value="ECO:0007669"/>
    <property type="project" value="UniProtKB-SubCell"/>
</dbReference>
<dbReference type="GO" id="GO:0000917">
    <property type="term" value="P:division septum assembly"/>
    <property type="evidence" value="ECO:0007669"/>
    <property type="project" value="UniProtKB-KW"/>
</dbReference>
<dbReference type="GO" id="GO:0043093">
    <property type="term" value="P:FtsZ-dependent cytokinesis"/>
    <property type="evidence" value="ECO:0007669"/>
    <property type="project" value="UniProtKB-UniRule"/>
</dbReference>
<dbReference type="Gene3D" id="3.30.110.150">
    <property type="entry name" value="SepF-like protein"/>
    <property type="match status" value="1"/>
</dbReference>
<dbReference type="HAMAP" id="MF_01197">
    <property type="entry name" value="SepF"/>
    <property type="match status" value="1"/>
</dbReference>
<dbReference type="InterPro" id="IPR023052">
    <property type="entry name" value="Cell_div_SepF"/>
</dbReference>
<dbReference type="InterPro" id="IPR007561">
    <property type="entry name" value="Cell_div_SepF/SepF-rel"/>
</dbReference>
<dbReference type="InterPro" id="IPR038594">
    <property type="entry name" value="SepF-like_sf"/>
</dbReference>
<dbReference type="PANTHER" id="PTHR35798">
    <property type="entry name" value="CELL DIVISION PROTEIN SEPF"/>
    <property type="match status" value="1"/>
</dbReference>
<dbReference type="PANTHER" id="PTHR35798:SF1">
    <property type="entry name" value="CELL DIVISION PROTEIN SEPF"/>
    <property type="match status" value="1"/>
</dbReference>
<dbReference type="Pfam" id="PF04472">
    <property type="entry name" value="SepF"/>
    <property type="match status" value="1"/>
</dbReference>
<accession>C4L5V1</accession>
<keyword id="KW-0131">Cell cycle</keyword>
<keyword id="KW-0132">Cell division</keyword>
<keyword id="KW-0963">Cytoplasm</keyword>
<keyword id="KW-0717">Septation</keyword>
<comment type="function">
    <text evidence="1">Cell division protein that is part of the divisome complex and is recruited early to the Z-ring. Probably stimulates Z-ring formation, perhaps through the cross-linking of FtsZ protofilaments. Its function overlaps with FtsA.</text>
</comment>
<comment type="subunit">
    <text evidence="1">Homodimer. Interacts with FtsZ.</text>
</comment>
<comment type="subcellular location">
    <subcellularLocation>
        <location evidence="1">Cytoplasm</location>
    </subcellularLocation>
    <text evidence="1">Localizes to the division site, in a FtsZ-dependent manner.</text>
</comment>
<comment type="similarity">
    <text evidence="1">Belongs to the SepF family.</text>
</comment>
<sequence length="156" mass="17328">MSIKNKMKDFFGLEEDPNSTYEEEEYAVANAAAPSTTETSVVRQDDRPKSANNLVALNTKKKDRSKVVLAEPRVFAEAQDISDHLKENRAVIVNLQRMSKEQSRQVVNFLSGVVYALEGSMTSIGHNTILCTPNNVELTGSISNLISEDELHSKGW</sequence>
<evidence type="ECO:0000255" key="1">
    <source>
        <dbReference type="HAMAP-Rule" id="MF_01197"/>
    </source>
</evidence>
<evidence type="ECO:0000256" key="2">
    <source>
        <dbReference type="SAM" id="MobiDB-lite"/>
    </source>
</evidence>
<organism>
    <name type="scientific">Exiguobacterium sp. (strain ATCC BAA-1283 / AT1b)</name>
    <dbReference type="NCBI Taxonomy" id="360911"/>
    <lineage>
        <taxon>Bacteria</taxon>
        <taxon>Bacillati</taxon>
        <taxon>Bacillota</taxon>
        <taxon>Bacilli</taxon>
        <taxon>Bacillales</taxon>
        <taxon>Bacillales Family XII. Incertae Sedis</taxon>
        <taxon>Exiguobacterium</taxon>
    </lineage>
</organism>
<protein>
    <recommendedName>
        <fullName evidence="1">Cell division protein SepF</fullName>
    </recommendedName>
</protein>
<proteinExistence type="inferred from homology"/>
<gene>
    <name evidence="1" type="primary">sepF</name>
    <name type="ordered locus">EAT1b_2843</name>
</gene>